<proteinExistence type="evidence at transcript level"/>
<keyword id="KW-0009">Actin-binding</keyword>
<keyword id="KW-0067">ATP-binding</keyword>
<keyword id="KW-0175">Coiled coil</keyword>
<keyword id="KW-0963">Cytoplasm</keyword>
<keyword id="KW-0488">Methylation</keyword>
<keyword id="KW-0505">Motor protein</keyword>
<keyword id="KW-0514">Muscle protein</keyword>
<keyword id="KW-0518">Myosin</keyword>
<keyword id="KW-0547">Nucleotide-binding</keyword>
<keyword id="KW-0597">Phosphoprotein</keyword>
<keyword id="KW-1185">Reference proteome</keyword>
<keyword id="KW-0787">Thick filament</keyword>
<organism>
    <name type="scientific">Mus musculus</name>
    <name type="common">Mouse</name>
    <dbReference type="NCBI Taxonomy" id="10090"/>
    <lineage>
        <taxon>Eukaryota</taxon>
        <taxon>Metazoa</taxon>
        <taxon>Chordata</taxon>
        <taxon>Craniata</taxon>
        <taxon>Vertebrata</taxon>
        <taxon>Euteleostomi</taxon>
        <taxon>Mammalia</taxon>
        <taxon>Eutheria</taxon>
        <taxon>Euarchontoglires</taxon>
        <taxon>Glires</taxon>
        <taxon>Rodentia</taxon>
        <taxon>Myomorpha</taxon>
        <taxon>Muroidea</taxon>
        <taxon>Muridae</taxon>
        <taxon>Murinae</taxon>
        <taxon>Mus</taxon>
        <taxon>Mus</taxon>
    </lineage>
</organism>
<evidence type="ECO:0000250" key="1">
    <source>
        <dbReference type="UniProtKB" id="Q28641"/>
    </source>
</evidence>
<evidence type="ECO:0000250" key="2">
    <source>
        <dbReference type="UniProtKB" id="Q29RW1"/>
    </source>
</evidence>
<evidence type="ECO:0000255" key="3"/>
<evidence type="ECO:0000255" key="4">
    <source>
        <dbReference type="PROSITE-ProRule" id="PRU00116"/>
    </source>
</evidence>
<evidence type="ECO:0000255" key="5">
    <source>
        <dbReference type="PROSITE-ProRule" id="PRU00782"/>
    </source>
</evidence>
<evidence type="ECO:0000255" key="6">
    <source>
        <dbReference type="PROSITE-ProRule" id="PRU01190"/>
    </source>
</evidence>
<evidence type="ECO:0000256" key="7">
    <source>
        <dbReference type="SAM" id="MobiDB-lite"/>
    </source>
</evidence>
<evidence type="ECO:0000305" key="8"/>
<reference key="1">
    <citation type="journal article" date="2009" name="PLoS Biol.">
        <title>Lineage-specific biology revealed by a finished genome assembly of the mouse.</title>
        <authorList>
            <person name="Church D.M."/>
            <person name="Goodstadt L."/>
            <person name="Hillier L.W."/>
            <person name="Zody M.C."/>
            <person name="Goldstein S."/>
            <person name="She X."/>
            <person name="Bult C.J."/>
            <person name="Agarwala R."/>
            <person name="Cherry J.L."/>
            <person name="DiCuccio M."/>
            <person name="Hlavina W."/>
            <person name="Kapustin Y."/>
            <person name="Meric P."/>
            <person name="Maglott D."/>
            <person name="Birtle Z."/>
            <person name="Marques A.C."/>
            <person name="Graves T."/>
            <person name="Zhou S."/>
            <person name="Teague B."/>
            <person name="Potamousis K."/>
            <person name="Churas C."/>
            <person name="Place M."/>
            <person name="Herschleb J."/>
            <person name="Runnheim R."/>
            <person name="Forrest D."/>
            <person name="Amos-Landgraf J."/>
            <person name="Schwartz D.C."/>
            <person name="Cheng Z."/>
            <person name="Lindblad-Toh K."/>
            <person name="Eichler E.E."/>
            <person name="Ponting C.P."/>
        </authorList>
    </citation>
    <scope>NUCLEOTIDE SEQUENCE [LARGE SCALE GENOMIC DNA]</scope>
    <source>
        <strain>C57BL/6J</strain>
    </source>
</reference>
<reference key="2">
    <citation type="journal article" date="1985" name="Proc. Natl. Acad. Sci. U.S.A.">
        <title>Genes for skeletal muscle myosin heavy chains are clustered and are not located on the same mouse chromosome as a cardiac myosin heavy chain gene.</title>
        <authorList>
            <person name="Weydert A."/>
            <person name="Daubas P."/>
            <person name="Lazaridis I."/>
            <person name="Barton P."/>
            <person name="Garner I."/>
            <person name="Leader D.P."/>
            <person name="Bonhomme F."/>
            <person name="Catalan J."/>
            <person name="Simon D."/>
            <person name="Guenet J.-L."/>
            <person name="Gros F."/>
            <person name="Buckingham M.E."/>
        </authorList>
    </citation>
    <scope>NUCLEOTIDE SEQUENCE [MRNA] OF 1824-1937</scope>
</reference>
<comment type="function">
    <text>Muscle contraction.</text>
</comment>
<comment type="subunit">
    <text>Muscle myosin is a hexameric protein that consists of 2 heavy chain subunits (MHC), 2 alkali light chain subunits (MLC) and 2 regulatory light chain subunits (MLC-2).</text>
</comment>
<comment type="subcellular location">
    <subcellularLocation>
        <location>Cytoplasm</location>
        <location>Myofibril</location>
    </subcellularLocation>
    <text>Thick filaments of the myofibrils.</text>
</comment>
<comment type="domain">
    <text>The rodlike tail sequence is highly repetitive, showing cycles of a 28-residue repeat pattern composed of 4 heptapeptides, characteristic for alpha-helical coiled coils.</text>
</comment>
<comment type="domain">
    <text evidence="8">Limited proteolysis of myosin heavy chain produces 1 light meromyosin (LMM) and 1 heavy meromyosin (HMM). HMM can be further cleaved into 2 globular subfragments (S1) and 1 rod-shaped subfragment (S2).</text>
</comment>
<comment type="similarity">
    <text evidence="8">Belongs to the TRAFAC class myosin-kinesin ATPase superfamily. Myosin family.</text>
</comment>
<name>MYH8_MOUSE</name>
<dbReference type="EMBL" id="AL596129">
    <property type="status" value="NOT_ANNOTATED_CDS"/>
    <property type="molecule type" value="Genomic_DNA"/>
</dbReference>
<dbReference type="EMBL" id="M12289">
    <property type="protein sequence ID" value="AAA39795.1"/>
    <property type="molecule type" value="mRNA"/>
</dbReference>
<dbReference type="CCDS" id="CCDS24857.1"/>
<dbReference type="PIR" id="B24733">
    <property type="entry name" value="B24733"/>
</dbReference>
<dbReference type="RefSeq" id="NP_796343.2">
    <property type="nucleotide sequence ID" value="NM_177369.3"/>
</dbReference>
<dbReference type="SMR" id="P13542"/>
<dbReference type="BioGRID" id="201649">
    <property type="interactions" value="7"/>
</dbReference>
<dbReference type="FunCoup" id="P13542">
    <property type="interactions" value="225"/>
</dbReference>
<dbReference type="STRING" id="10090.ENSMUSP00000019625"/>
<dbReference type="GlyGen" id="P13542">
    <property type="glycosylation" value="1 site, 1 O-linked glycan (1 site)"/>
</dbReference>
<dbReference type="iPTMnet" id="P13542"/>
<dbReference type="PhosphoSitePlus" id="P13542"/>
<dbReference type="jPOST" id="P13542"/>
<dbReference type="PaxDb" id="10090-ENSMUSP00000019625"/>
<dbReference type="PeptideAtlas" id="P13542"/>
<dbReference type="ProteomicsDB" id="287657"/>
<dbReference type="Antibodypedia" id="4295">
    <property type="antibodies" value="67 antibodies from 20 providers"/>
</dbReference>
<dbReference type="DNASU" id="17885"/>
<dbReference type="Ensembl" id="ENSMUST00000019625.12">
    <property type="protein sequence ID" value="ENSMUSP00000019625.6"/>
    <property type="gene ID" value="ENSMUSG00000055775.17"/>
</dbReference>
<dbReference type="GeneID" id="17885"/>
<dbReference type="KEGG" id="mmu:17885"/>
<dbReference type="UCSC" id="uc007jmn.1">
    <property type="organism name" value="mouse"/>
</dbReference>
<dbReference type="AGR" id="MGI:1339712"/>
<dbReference type="CTD" id="4626"/>
<dbReference type="MGI" id="MGI:1339712">
    <property type="gene designation" value="Myh8"/>
</dbReference>
<dbReference type="VEuPathDB" id="HostDB:ENSMUSG00000055775"/>
<dbReference type="eggNOG" id="KOG0161">
    <property type="taxonomic scope" value="Eukaryota"/>
</dbReference>
<dbReference type="GeneTree" id="ENSGT00940000161785"/>
<dbReference type="HOGENOM" id="CLU_000192_8_1_1"/>
<dbReference type="InParanoid" id="P13542"/>
<dbReference type="OMA" id="NITHVHT"/>
<dbReference type="OrthoDB" id="312459at2759"/>
<dbReference type="PhylomeDB" id="P13542"/>
<dbReference type="TreeFam" id="TF314375"/>
<dbReference type="Reactome" id="R-MMU-390522">
    <property type="pathway name" value="Striated Muscle Contraction"/>
</dbReference>
<dbReference type="BioGRID-ORCS" id="17885">
    <property type="hits" value="1 hit in 75 CRISPR screens"/>
</dbReference>
<dbReference type="PRO" id="PR:P13542"/>
<dbReference type="Proteomes" id="UP000000589">
    <property type="component" value="Chromosome 11"/>
</dbReference>
<dbReference type="RNAct" id="P13542">
    <property type="molecule type" value="protein"/>
</dbReference>
<dbReference type="Bgee" id="ENSMUSG00000055775">
    <property type="expression patterns" value="Expressed in masseter muscle and 105 other cell types or tissues"/>
</dbReference>
<dbReference type="ExpressionAtlas" id="P13542">
    <property type="expression patterns" value="baseline and differential"/>
</dbReference>
<dbReference type="GO" id="GO:0030016">
    <property type="term" value="C:myofibril"/>
    <property type="evidence" value="ECO:0007669"/>
    <property type="project" value="UniProtKB-SubCell"/>
</dbReference>
<dbReference type="GO" id="GO:0016459">
    <property type="term" value="C:myosin complex"/>
    <property type="evidence" value="ECO:0000314"/>
    <property type="project" value="MGI"/>
</dbReference>
<dbReference type="GO" id="GO:0032982">
    <property type="term" value="C:myosin filament"/>
    <property type="evidence" value="ECO:0007669"/>
    <property type="project" value="UniProtKB-KW"/>
</dbReference>
<dbReference type="GO" id="GO:0051015">
    <property type="term" value="F:actin filament binding"/>
    <property type="evidence" value="ECO:0007669"/>
    <property type="project" value="InterPro"/>
</dbReference>
<dbReference type="GO" id="GO:0005524">
    <property type="term" value="F:ATP binding"/>
    <property type="evidence" value="ECO:0007669"/>
    <property type="project" value="UniProtKB-KW"/>
</dbReference>
<dbReference type="GO" id="GO:0016887">
    <property type="term" value="F:ATP hydrolysis activity"/>
    <property type="evidence" value="ECO:0007669"/>
    <property type="project" value="Ensembl"/>
</dbReference>
<dbReference type="GO" id="GO:0000146">
    <property type="term" value="F:microfilament motor activity"/>
    <property type="evidence" value="ECO:0007669"/>
    <property type="project" value="Ensembl"/>
</dbReference>
<dbReference type="GO" id="GO:0046034">
    <property type="term" value="P:ATP metabolic process"/>
    <property type="evidence" value="ECO:0007669"/>
    <property type="project" value="Ensembl"/>
</dbReference>
<dbReference type="GO" id="GO:0030049">
    <property type="term" value="P:muscle filament sliding"/>
    <property type="evidence" value="ECO:0007669"/>
    <property type="project" value="Ensembl"/>
</dbReference>
<dbReference type="GO" id="GO:0003009">
    <property type="term" value="P:skeletal muscle contraction"/>
    <property type="evidence" value="ECO:0007669"/>
    <property type="project" value="Ensembl"/>
</dbReference>
<dbReference type="FunFam" id="1.10.10.820:FF:000001">
    <property type="entry name" value="Myosin heavy chain"/>
    <property type="match status" value="1"/>
</dbReference>
<dbReference type="FunFam" id="1.20.5.340:FF:000002">
    <property type="entry name" value="Myosin heavy chain"/>
    <property type="match status" value="1"/>
</dbReference>
<dbReference type="FunFam" id="1.20.5.340:FF:000003">
    <property type="entry name" value="Myosin heavy chain"/>
    <property type="match status" value="1"/>
</dbReference>
<dbReference type="FunFam" id="1.20.5.340:FF:000004">
    <property type="entry name" value="Myosin heavy chain"/>
    <property type="match status" value="1"/>
</dbReference>
<dbReference type="FunFam" id="1.20.5.340:FF:000006">
    <property type="entry name" value="Myosin heavy chain"/>
    <property type="match status" value="1"/>
</dbReference>
<dbReference type="FunFam" id="1.20.5.340:FF:000013">
    <property type="entry name" value="Myosin heavy chain"/>
    <property type="match status" value="1"/>
</dbReference>
<dbReference type="FunFam" id="1.20.5.370:FF:000001">
    <property type="entry name" value="Myosin heavy chain"/>
    <property type="match status" value="1"/>
</dbReference>
<dbReference type="FunFam" id="1.20.5.370:FF:000002">
    <property type="entry name" value="Myosin heavy chain"/>
    <property type="match status" value="1"/>
</dbReference>
<dbReference type="FunFam" id="1.20.5.370:FF:000003">
    <property type="entry name" value="Myosin heavy chain"/>
    <property type="match status" value="1"/>
</dbReference>
<dbReference type="FunFam" id="1.20.5.370:FF:000007">
    <property type="entry name" value="Myosin heavy chain"/>
    <property type="match status" value="1"/>
</dbReference>
<dbReference type="FunFam" id="1.20.5.370:FF:000008">
    <property type="entry name" value="Myosin heavy chain"/>
    <property type="match status" value="1"/>
</dbReference>
<dbReference type="FunFam" id="1.20.5.4820:FF:000001">
    <property type="entry name" value="Myosin heavy chain"/>
    <property type="match status" value="1"/>
</dbReference>
<dbReference type="FunFam" id="1.20.58.530:FF:000001">
    <property type="entry name" value="Myosin heavy chain"/>
    <property type="match status" value="1"/>
</dbReference>
<dbReference type="FunFam" id="2.30.30.360:FF:000001">
    <property type="entry name" value="Myosin heavy chain"/>
    <property type="match status" value="1"/>
</dbReference>
<dbReference type="FunFam" id="3.40.850.10:FF:000024">
    <property type="entry name" value="Myosin heavy chain, isoform J"/>
    <property type="match status" value="1"/>
</dbReference>
<dbReference type="FunFam" id="1.20.120.720:FF:000001">
    <property type="entry name" value="Myosin heavy chain, muscle"/>
    <property type="match status" value="1"/>
</dbReference>
<dbReference type="Gene3D" id="1.10.10.820">
    <property type="match status" value="1"/>
</dbReference>
<dbReference type="Gene3D" id="1.20.5.340">
    <property type="match status" value="5"/>
</dbReference>
<dbReference type="Gene3D" id="1.20.5.370">
    <property type="match status" value="4"/>
</dbReference>
<dbReference type="Gene3D" id="1.20.5.4820">
    <property type="match status" value="1"/>
</dbReference>
<dbReference type="Gene3D" id="1.20.58.530">
    <property type="match status" value="1"/>
</dbReference>
<dbReference type="Gene3D" id="6.10.250.2420">
    <property type="match status" value="1"/>
</dbReference>
<dbReference type="Gene3D" id="3.40.850.10">
    <property type="entry name" value="Kinesin motor domain"/>
    <property type="match status" value="1"/>
</dbReference>
<dbReference type="Gene3D" id="2.30.30.360">
    <property type="entry name" value="Myosin S1 fragment, N-terminal"/>
    <property type="match status" value="1"/>
</dbReference>
<dbReference type="Gene3D" id="1.20.120.720">
    <property type="entry name" value="Myosin VI head, motor domain, U50 subdomain"/>
    <property type="match status" value="1"/>
</dbReference>
<dbReference type="InterPro" id="IPR000048">
    <property type="entry name" value="IQ_motif_EF-hand-BS"/>
</dbReference>
<dbReference type="InterPro" id="IPR036961">
    <property type="entry name" value="Kinesin_motor_dom_sf"/>
</dbReference>
<dbReference type="InterPro" id="IPR001609">
    <property type="entry name" value="Myosin_head_motor_dom-like"/>
</dbReference>
<dbReference type="InterPro" id="IPR004009">
    <property type="entry name" value="Myosin_N"/>
</dbReference>
<dbReference type="InterPro" id="IPR008989">
    <property type="entry name" value="Myosin_S1_N"/>
</dbReference>
<dbReference type="InterPro" id="IPR002928">
    <property type="entry name" value="Myosin_tail"/>
</dbReference>
<dbReference type="InterPro" id="IPR027417">
    <property type="entry name" value="P-loop_NTPase"/>
</dbReference>
<dbReference type="InterPro" id="IPR014751">
    <property type="entry name" value="XRCC4-like_C"/>
</dbReference>
<dbReference type="PANTHER" id="PTHR45615">
    <property type="entry name" value="MYOSIN HEAVY CHAIN, NON-MUSCLE"/>
    <property type="match status" value="1"/>
</dbReference>
<dbReference type="PANTHER" id="PTHR45615:SF35">
    <property type="entry name" value="MYOSIN-8"/>
    <property type="match status" value="1"/>
</dbReference>
<dbReference type="Pfam" id="PF00063">
    <property type="entry name" value="Myosin_head"/>
    <property type="match status" value="1"/>
</dbReference>
<dbReference type="Pfam" id="PF02736">
    <property type="entry name" value="Myosin_N"/>
    <property type="match status" value="1"/>
</dbReference>
<dbReference type="Pfam" id="PF01576">
    <property type="entry name" value="Myosin_tail_1"/>
    <property type="match status" value="1"/>
</dbReference>
<dbReference type="PRINTS" id="PR00193">
    <property type="entry name" value="MYOSINHEAVY"/>
</dbReference>
<dbReference type="SMART" id="SM00015">
    <property type="entry name" value="IQ"/>
    <property type="match status" value="1"/>
</dbReference>
<dbReference type="SMART" id="SM00242">
    <property type="entry name" value="MYSc"/>
    <property type="match status" value="1"/>
</dbReference>
<dbReference type="SUPFAM" id="SSF90257">
    <property type="entry name" value="Myosin rod fragments"/>
    <property type="match status" value="4"/>
</dbReference>
<dbReference type="SUPFAM" id="SSF52540">
    <property type="entry name" value="P-loop containing nucleoside triphosphate hydrolases"/>
    <property type="match status" value="1"/>
</dbReference>
<dbReference type="SUPFAM" id="SSF57997">
    <property type="entry name" value="Tropomyosin"/>
    <property type="match status" value="1"/>
</dbReference>
<dbReference type="PROSITE" id="PS50096">
    <property type="entry name" value="IQ"/>
    <property type="match status" value="1"/>
</dbReference>
<dbReference type="PROSITE" id="PS51456">
    <property type="entry name" value="MYOSIN_MOTOR"/>
    <property type="match status" value="1"/>
</dbReference>
<dbReference type="PROSITE" id="PS51844">
    <property type="entry name" value="SH3_LIKE"/>
    <property type="match status" value="1"/>
</dbReference>
<sequence>MSAGSDAEMAIFGEAAPYLRKSEKERIEAQNKPFDAKTSVFVAEPKESYVKSVIQSKDGGKVTVKTESGATLTVKEDQVFPMNPPKYDKIEDMAMMTHLHEPGVLYNLKERYAAWMIYTYSGLFCVTVNPYKWLPVYNPEVVAAYRGKKRQEAPPHIFSISDNAYQFMLTDRENQSILITGESGAGKTVNTKRVIQYFATIAVTGDKKKEESGKMQGTLEDQIISANPLLEAFGNAKTVRNDNSSRFGKFIRIHFGTTGKLASADIETYLLEKSRVTFQLKAERSYHIFYQITSNKKPELIEMLLITTNPYDYAFVSQGEITVPSIDDQEELMATDSAIDILGFSPEEKVSIYKLTGAVMHYGNMKFKQKQREEQAEPDGTEVADKAAYLQCLNSADLLKALCYPRVKVGNEYVTKGQTVQQVYNAVGALAKAVYEKMFLWMVTRINQQLDTKQPRQYFIGVLDIAGFEIFDFNSLEQLCINFTNEKLQQFFNHHMFVLEQEEYKKEGIEWTFIDFGMDLAACIELIEKPLGIFSILEEECMFPKATDTSFKNKLYDQHLGKSNNFQKPKPTKGKAEAHFSLVHYAGTVDYNITGWLDKNKDPLNDTVVGLYQKSAMKTLASLFSTYASAEADGGAKKGAKKKGSSFQTVSALFRENLNKLMTNLRSTHPHFVRCIIPNETKTPGAMEHELVLHQLRCNGVLEGIRICRKGFPSRILYGDFKQRYKVLNASAIPEGQFIDSKKASEKLLGSIDIDHTQYKFGHTKVFFKAGLLGLLEEMRDEKLAQIITRTQAVCRGYLMRVEYQKMLLRRESIFCIQYNVRAFMNVKHWPWMKLFFKIKPLLKSAETEKEMATMKEEFQKTKDELAKSEAKRKELEEKMVTLLKEKNDLQLQVQSEADSLADAEERCEQLIKNKIQLEAKIKEVTERAEDEEEINAELTAKKRKLEDECSELKKDIDDLELTLAKVEKEKHATENKVKNLTEEMAGLDENIAKLTKEKKALQEAHQQTLDDLQAEEDKVNTLTKAKTKLEQQVDDLEGSLEQEKKLRMDLERAKRKLEGDLKLAQESTMDIENDKQQLDEKLKKKEFEISNLISKIEDEQAVEIQLQKKIKELQARIEELEEEIEAERASRAKAEKQRSDLSRELEEISERLEEAGGATSAQVEMNKKRETEFQKLRRDLEEATLQHEATAAALRKKHADSVAELGEQIDNLQRVKQKLEKEKSELKMEIDDLSSNAEAIAKAKGNLEKMCRTLEDQVSELKSKEEEQQRLINELTAQRARLQTEAGEYSRQLDEKDALVSQLSRSKQASTQQIEELKRQLEEETKAKNALAHALQSSRHDCDLLREQYEEEQEGKAELQRALSKANSEVAQWRTKYETDAIQRTEELEEAKKKLAQRLQAAEEHVEAVNAKCASLEKTKQRLQNEVEDLMIDVERTNAACAALDKKQRNFDKVLSEWRQKYEETQAELESCQKESRTLSTELFKVKNAYEESLDHLETLRRENKNLQQEISDLTEQIAEGGKHIHELEKIKKQVEQEKCEIQAALEEAEASLEHEEGKILRIQLELNQVKSEIDRKIAEKDEEIDQLKRNHVRVVETMQSTLDAEIRSRNDALRVKKKMEGDLNEMEIQLNHANRLAAESLRNYRNTQGILKDTQLHLDDALRGQEDLKEQLAIVERRANLLQAEIEELRATLEQTERSRKIAEQELLDASERVQLLHTQNTSLINTKKKLENDVSQLQSEVEEVIQESRNAEEKAKKAITDAAMMAEELKKEQDTSAHLERMKKNMEQTVKDLQHRLDEAEQLALKGGKKQIQKLEARVRELEGEVENEQKRNAEAVKGLRKHERRVKELTYQTEEDRKNVLRLQDLVDKLQAKVKSYKRQAEEAEEQSNANLAKFRKLQHELEEAEERADIAESQVNKLRVKSREVHTKISAE</sequence>
<accession>P13542</accession>
<accession>Q5SX36</accession>
<protein>
    <recommendedName>
        <fullName>Myosin-8</fullName>
    </recommendedName>
    <alternativeName>
        <fullName>Myosin heavy chain 8</fullName>
    </alternativeName>
    <alternativeName>
        <fullName>Myosin heavy chain, skeletal muscle, perinatal</fullName>
        <shortName>MyHC-perinatal</shortName>
    </alternativeName>
</protein>
<feature type="chain" id="PRO_0000123414" description="Myosin-8">
    <location>
        <begin position="1"/>
        <end position="1937"/>
    </location>
</feature>
<feature type="domain" description="Myosin N-terminal SH3-like" evidence="6">
    <location>
        <begin position="35"/>
        <end position="84"/>
    </location>
</feature>
<feature type="domain" description="Myosin motor" evidence="5">
    <location>
        <begin position="88"/>
        <end position="781"/>
    </location>
</feature>
<feature type="domain" description="IQ" evidence="4">
    <location>
        <begin position="781"/>
        <end position="813"/>
    </location>
</feature>
<feature type="region of interest" description="Actin-binding">
    <location>
        <begin position="658"/>
        <end position="680"/>
    </location>
</feature>
<feature type="region of interest" description="Actin-binding">
    <location>
        <begin position="760"/>
        <end position="774"/>
    </location>
</feature>
<feature type="region of interest" description="Disordered" evidence="7">
    <location>
        <begin position="1125"/>
        <end position="1171"/>
    </location>
</feature>
<feature type="coiled-coil region" evidence="3">
    <location>
        <begin position="842"/>
        <end position="1937"/>
    </location>
</feature>
<feature type="compositionally biased region" description="Basic and acidic residues" evidence="7">
    <location>
        <begin position="1127"/>
        <end position="1155"/>
    </location>
</feature>
<feature type="binding site">
    <location>
        <begin position="181"/>
        <end position="188"/>
    </location>
    <ligand>
        <name>ATP</name>
        <dbReference type="ChEBI" id="CHEBI:30616"/>
    </ligand>
</feature>
<feature type="modified residue" description="Phosphothreonine" evidence="2">
    <location>
        <position position="66"/>
    </location>
</feature>
<feature type="modified residue" description="Phosphothreonine" evidence="2">
    <location>
        <position position="71"/>
    </location>
</feature>
<feature type="modified residue" description="N6,N6,N6-trimethyllysine" evidence="3">
    <location>
        <position position="132"/>
    </location>
</feature>
<feature type="modified residue" description="Phosphotyrosine" evidence="2">
    <location>
        <position position="389"/>
    </location>
</feature>
<feature type="modified residue" description="Phosphothreonine" evidence="2">
    <location>
        <position position="419"/>
    </location>
</feature>
<feature type="modified residue" description="Phosphotyrosine" evidence="2">
    <location>
        <position position="424"/>
    </location>
</feature>
<feature type="modified residue" description="Phosphoserine" evidence="2">
    <location>
        <position position="625"/>
    </location>
</feature>
<feature type="modified residue" description="Pros-methylhistidine" evidence="1">
    <location>
        <position position="756"/>
    </location>
</feature>
<feature type="modified residue" description="Phosphoserine" evidence="2">
    <location>
        <position position="1091"/>
    </location>
</feature>
<feature type="modified residue" description="Phosphoserine" evidence="2">
    <location>
        <position position="1095"/>
    </location>
</feature>
<feature type="modified residue" description="Phosphoserine" evidence="2">
    <location>
        <position position="1161"/>
    </location>
</feature>
<feature type="modified residue" description="Phosphoserine" evidence="2">
    <location>
        <position position="1236"/>
    </location>
</feature>
<feature type="modified residue" description="Phosphothreonine" evidence="2">
    <location>
        <position position="1254"/>
    </location>
</feature>
<feature type="modified residue" description="Phosphoserine" evidence="2">
    <location>
        <position position="1260"/>
    </location>
</feature>
<feature type="modified residue" description="Phosphothreonine" evidence="2">
    <location>
        <position position="1285"/>
    </location>
</feature>
<feature type="modified residue" description="Phosphoserine" evidence="2">
    <location>
        <position position="1291"/>
    </location>
</feature>
<feature type="modified residue" description="Phosphoserine" evidence="2">
    <location>
        <position position="1302"/>
    </location>
</feature>
<feature type="modified residue" description="Phosphoserine" evidence="2">
    <location>
        <position position="1305"/>
    </location>
</feature>
<feature type="modified residue" description="Phosphotyrosine" evidence="2">
    <location>
        <position position="1463"/>
    </location>
</feature>
<feature type="modified residue" description="Phosphothreonine" evidence="2">
    <location>
        <position position="1466"/>
    </location>
</feature>
<feature type="modified residue" description="Phosphotyrosine" evidence="2">
    <location>
        <position position="1491"/>
    </location>
</feature>
<feature type="modified residue" description="Phosphoserine" evidence="2">
    <location>
        <position position="1494"/>
    </location>
</feature>
<feature type="modified residue" description="Phosphothreonine" evidence="2">
    <location>
        <position position="1500"/>
    </location>
</feature>
<feature type="modified residue" description="Phosphoserine" evidence="2">
    <location>
        <position position="1513"/>
    </location>
</feature>
<feature type="modified residue" description="Phosphothreonine" evidence="2">
    <location>
        <position position="1516"/>
    </location>
</feature>
<feature type="modified residue" description="Phosphoserine" evidence="2">
    <location>
        <position position="1553"/>
    </location>
</feature>
<feature type="modified residue" description="Phosphoserine" evidence="2">
    <location>
        <position position="1573"/>
    </location>
</feature>
<feature type="modified residue" description="Phosphoserine" evidence="2">
    <location>
        <position position="1602"/>
    </location>
</feature>
<feature type="modified residue" description="Phosphoserine" evidence="2">
    <location>
        <position position="1713"/>
    </location>
</feature>
<feature type="modified residue" description="Phosphoserine" evidence="2">
    <location>
        <position position="1725"/>
    </location>
</feature>
<feature type="modified residue" description="Phosphothreonine" evidence="2">
    <location>
        <position position="1729"/>
    </location>
</feature>
<feature type="modified residue" description="Phosphoserine" evidence="2">
    <location>
        <position position="1738"/>
    </location>
</feature>
<gene>
    <name type="primary">Myh8</name>
    <name type="synonym">Myhsp</name>
</gene>